<organism>
    <name type="scientific">Archaeoglobus fulgidus (strain ATCC 49558 / DSM 4304 / JCM 9628 / NBRC 100126 / VC-16)</name>
    <dbReference type="NCBI Taxonomy" id="224325"/>
    <lineage>
        <taxon>Archaea</taxon>
        <taxon>Methanobacteriati</taxon>
        <taxon>Methanobacteriota</taxon>
        <taxon>Archaeoglobi</taxon>
        <taxon>Archaeoglobales</taxon>
        <taxon>Archaeoglobaceae</taxon>
        <taxon>Archaeoglobus</taxon>
    </lineage>
</organism>
<comment type="function">
    <text evidence="1">Binds to the 23S rRNA.</text>
</comment>
<comment type="cofactor">
    <cofactor evidence="1">
        <name>Zn(2+)</name>
        <dbReference type="ChEBI" id="CHEBI:29105"/>
    </cofactor>
    <text evidence="1">Binds 1 zinc ion per subunit.</text>
</comment>
<comment type="subunit">
    <text evidence="1">Part of the 50S ribosomal subunit.</text>
</comment>
<comment type="similarity">
    <text evidence="1">Belongs to the eukaryotic ribosomal protein eL43 family. Putative zinc-binding subfamily.</text>
</comment>
<gene>
    <name evidence="1" type="primary">rpl37ae</name>
    <name type="ordered locus">AF_0057</name>
</gene>
<sequence>MGRTKKVRSAGRFGPRYGLRVRRTWLEIEAVQRQKYVCKKCGKKAVKRSGTGIWECRHCGYKFAGGCYQPVTPGGKIVEKSVG</sequence>
<feature type="chain" id="PRO_0000139840" description="Large ribosomal subunit protein eL43">
    <location>
        <begin position="1"/>
        <end position="83"/>
    </location>
</feature>
<feature type="zinc finger region" description="C4-type" evidence="1">
    <location>
        <begin position="38"/>
        <end position="59"/>
    </location>
</feature>
<feature type="binding site" evidence="1">
    <location>
        <position position="38"/>
    </location>
    <ligand>
        <name>Zn(2+)</name>
        <dbReference type="ChEBI" id="CHEBI:29105"/>
    </ligand>
</feature>
<feature type="binding site" evidence="1">
    <location>
        <position position="41"/>
    </location>
    <ligand>
        <name>Zn(2+)</name>
        <dbReference type="ChEBI" id="CHEBI:29105"/>
    </ligand>
</feature>
<feature type="binding site" evidence="1">
    <location>
        <position position="56"/>
    </location>
    <ligand>
        <name>Zn(2+)</name>
        <dbReference type="ChEBI" id="CHEBI:29105"/>
    </ligand>
</feature>
<feature type="binding site" evidence="1">
    <location>
        <position position="59"/>
    </location>
    <ligand>
        <name>Zn(2+)</name>
        <dbReference type="ChEBI" id="CHEBI:29105"/>
    </ligand>
</feature>
<proteinExistence type="inferred from homology"/>
<evidence type="ECO:0000255" key="1">
    <source>
        <dbReference type="HAMAP-Rule" id="MF_00327"/>
    </source>
</evidence>
<evidence type="ECO:0000305" key="2"/>
<reference key="1">
    <citation type="journal article" date="1997" name="Nature">
        <title>The complete genome sequence of the hyperthermophilic, sulphate-reducing archaeon Archaeoglobus fulgidus.</title>
        <authorList>
            <person name="Klenk H.-P."/>
            <person name="Clayton R.A."/>
            <person name="Tomb J.-F."/>
            <person name="White O."/>
            <person name="Nelson K.E."/>
            <person name="Ketchum K.A."/>
            <person name="Dodson R.J."/>
            <person name="Gwinn M.L."/>
            <person name="Hickey E.K."/>
            <person name="Peterson J.D."/>
            <person name="Richardson D.L."/>
            <person name="Kerlavage A.R."/>
            <person name="Graham D.E."/>
            <person name="Kyrpides N.C."/>
            <person name="Fleischmann R.D."/>
            <person name="Quackenbush J."/>
            <person name="Lee N.H."/>
            <person name="Sutton G.G."/>
            <person name="Gill S.R."/>
            <person name="Kirkness E.F."/>
            <person name="Dougherty B.A."/>
            <person name="McKenney K."/>
            <person name="Adams M.D."/>
            <person name="Loftus B.J."/>
            <person name="Peterson S.N."/>
            <person name="Reich C.I."/>
            <person name="McNeil L.K."/>
            <person name="Badger J.H."/>
            <person name="Glodek A."/>
            <person name="Zhou L."/>
            <person name="Overbeek R."/>
            <person name="Gocayne J.D."/>
            <person name="Weidman J.F."/>
            <person name="McDonald L.A."/>
            <person name="Utterback T.R."/>
            <person name="Cotton M.D."/>
            <person name="Spriggs T."/>
            <person name="Artiach P."/>
            <person name="Kaine B.P."/>
            <person name="Sykes S.M."/>
            <person name="Sadow P.W."/>
            <person name="D'Andrea K.P."/>
            <person name="Bowman C."/>
            <person name="Fujii C."/>
            <person name="Garland S.A."/>
            <person name="Mason T.M."/>
            <person name="Olsen G.J."/>
            <person name="Fraser C.M."/>
            <person name="Smith H.O."/>
            <person name="Woese C.R."/>
            <person name="Venter J.C."/>
        </authorList>
    </citation>
    <scope>NUCLEOTIDE SEQUENCE [LARGE SCALE GENOMIC DNA]</scope>
    <source>
        <strain>ATCC 49558 / DSM 4304 / JCM 9628 / NBRC 100126 / VC-16</strain>
    </source>
</reference>
<dbReference type="EMBL" id="AE000782">
    <property type="protein sequence ID" value="AAB91165.1"/>
    <property type="molecule type" value="Genomic_DNA"/>
</dbReference>
<dbReference type="PIR" id="A69257">
    <property type="entry name" value="A69257"/>
</dbReference>
<dbReference type="SMR" id="O30179"/>
<dbReference type="STRING" id="224325.AF_0057"/>
<dbReference type="PaxDb" id="224325-AF_0057"/>
<dbReference type="EnsemblBacteria" id="AAB91165">
    <property type="protein sequence ID" value="AAB91165"/>
    <property type="gene ID" value="AF_0057"/>
</dbReference>
<dbReference type="KEGG" id="afu:AF_0057"/>
<dbReference type="eggNOG" id="arCOG04208">
    <property type="taxonomic scope" value="Archaea"/>
</dbReference>
<dbReference type="HOGENOM" id="CLU_141199_1_0_2"/>
<dbReference type="OrthoDB" id="372011at2157"/>
<dbReference type="PhylomeDB" id="O30179"/>
<dbReference type="Proteomes" id="UP000002199">
    <property type="component" value="Chromosome"/>
</dbReference>
<dbReference type="GO" id="GO:1990904">
    <property type="term" value="C:ribonucleoprotein complex"/>
    <property type="evidence" value="ECO:0007669"/>
    <property type="project" value="UniProtKB-KW"/>
</dbReference>
<dbReference type="GO" id="GO:0005840">
    <property type="term" value="C:ribosome"/>
    <property type="evidence" value="ECO:0007669"/>
    <property type="project" value="UniProtKB-KW"/>
</dbReference>
<dbReference type="GO" id="GO:0070180">
    <property type="term" value="F:large ribosomal subunit rRNA binding"/>
    <property type="evidence" value="ECO:0007669"/>
    <property type="project" value="UniProtKB-UniRule"/>
</dbReference>
<dbReference type="GO" id="GO:0003735">
    <property type="term" value="F:structural constituent of ribosome"/>
    <property type="evidence" value="ECO:0007669"/>
    <property type="project" value="InterPro"/>
</dbReference>
<dbReference type="GO" id="GO:0008270">
    <property type="term" value="F:zinc ion binding"/>
    <property type="evidence" value="ECO:0007669"/>
    <property type="project" value="UniProtKB-UniRule"/>
</dbReference>
<dbReference type="GO" id="GO:0006412">
    <property type="term" value="P:translation"/>
    <property type="evidence" value="ECO:0007669"/>
    <property type="project" value="UniProtKB-UniRule"/>
</dbReference>
<dbReference type="Gene3D" id="2.20.25.30">
    <property type="match status" value="1"/>
</dbReference>
<dbReference type="HAMAP" id="MF_00327">
    <property type="entry name" value="Ribosomal_eL43"/>
    <property type="match status" value="1"/>
</dbReference>
<dbReference type="InterPro" id="IPR011331">
    <property type="entry name" value="Ribosomal_eL37/eL43"/>
</dbReference>
<dbReference type="InterPro" id="IPR002674">
    <property type="entry name" value="Ribosomal_eL43"/>
</dbReference>
<dbReference type="InterPro" id="IPR050522">
    <property type="entry name" value="Ribosomal_protein_eL43"/>
</dbReference>
<dbReference type="InterPro" id="IPR011332">
    <property type="entry name" value="Ribosomal_zn-bd"/>
</dbReference>
<dbReference type="NCBIfam" id="TIGR00280">
    <property type="entry name" value="eL43_euk_arch"/>
    <property type="match status" value="1"/>
</dbReference>
<dbReference type="NCBIfam" id="NF003058">
    <property type="entry name" value="PRK03976.1"/>
    <property type="match status" value="1"/>
</dbReference>
<dbReference type="PANTHER" id="PTHR48129">
    <property type="entry name" value="60S RIBOSOMAL PROTEIN L37A"/>
    <property type="match status" value="1"/>
</dbReference>
<dbReference type="PANTHER" id="PTHR48129:SF1">
    <property type="entry name" value="LARGE RIBOSOMAL SUBUNIT PROTEIN EL43"/>
    <property type="match status" value="1"/>
</dbReference>
<dbReference type="Pfam" id="PF01780">
    <property type="entry name" value="Ribosomal_L37ae"/>
    <property type="match status" value="1"/>
</dbReference>
<dbReference type="SUPFAM" id="SSF57829">
    <property type="entry name" value="Zn-binding ribosomal proteins"/>
    <property type="match status" value="1"/>
</dbReference>
<name>RL37A_ARCFU</name>
<protein>
    <recommendedName>
        <fullName evidence="1">Large ribosomal subunit protein eL43</fullName>
    </recommendedName>
    <alternativeName>
        <fullName evidence="2">50S ribosomal protein L37Ae</fullName>
    </alternativeName>
    <alternativeName>
        <fullName evidence="1">Ribosomal protein L43e</fullName>
    </alternativeName>
</protein>
<keyword id="KW-0479">Metal-binding</keyword>
<keyword id="KW-1185">Reference proteome</keyword>
<keyword id="KW-0687">Ribonucleoprotein</keyword>
<keyword id="KW-0689">Ribosomal protein</keyword>
<keyword id="KW-0694">RNA-binding</keyword>
<keyword id="KW-0699">rRNA-binding</keyword>
<keyword id="KW-0862">Zinc</keyword>
<keyword id="KW-0863">Zinc-finger</keyword>
<accession>O30179</accession>